<proteinExistence type="inferred from homology"/>
<organism>
    <name type="scientific">Tupiella akineta</name>
    <name type="common">Green alga</name>
    <name type="synonym">Pseudendoclonium akinetum</name>
    <dbReference type="NCBI Taxonomy" id="160070"/>
    <lineage>
        <taxon>Eukaryota</taxon>
        <taxon>Viridiplantae</taxon>
        <taxon>Chlorophyta</taxon>
        <taxon>Ulvophyceae</taxon>
        <taxon>OUU clade</taxon>
        <taxon>Ulotrichales</taxon>
        <taxon>Tupiellaceae</taxon>
        <taxon>Tupiella</taxon>
    </lineage>
</organism>
<name>RPOB_TUPAK</name>
<evidence type="ECO:0000255" key="1">
    <source>
        <dbReference type="HAMAP-Rule" id="MF_01321"/>
    </source>
</evidence>
<feature type="chain" id="PRO_0000224132" description="DNA-directed RNA polymerase subunit beta">
    <location>
        <begin position="1"/>
        <end position="2178"/>
    </location>
</feature>
<feature type="region of interest" description="Insert">
    <location>
        <begin position="269"/>
        <end position="325"/>
    </location>
</feature>
<feature type="region of interest" description="Insert">
    <location>
        <begin position="714"/>
        <end position="1508"/>
    </location>
</feature>
<feature type="region of interest" description="Insert">
    <location>
        <begin position="1703"/>
        <end position="1900"/>
    </location>
</feature>
<geneLocation type="chloroplast"/>
<accession>Q3ZJ93</accession>
<dbReference type="EC" id="2.7.7.6" evidence="1"/>
<dbReference type="EMBL" id="AY835431">
    <property type="protein sequence ID" value="AAV80598.1"/>
    <property type="molecule type" value="Genomic_DNA"/>
</dbReference>
<dbReference type="RefSeq" id="YP_636174.1">
    <property type="nucleotide sequence ID" value="NC_008114.1"/>
</dbReference>
<dbReference type="SMR" id="Q3ZJ93"/>
<dbReference type="GeneID" id="4108778"/>
<dbReference type="GO" id="GO:0009507">
    <property type="term" value="C:chloroplast"/>
    <property type="evidence" value="ECO:0007669"/>
    <property type="project" value="UniProtKB-SubCell"/>
</dbReference>
<dbReference type="GO" id="GO:0000428">
    <property type="term" value="C:DNA-directed RNA polymerase complex"/>
    <property type="evidence" value="ECO:0007669"/>
    <property type="project" value="UniProtKB-KW"/>
</dbReference>
<dbReference type="GO" id="GO:0005739">
    <property type="term" value="C:mitochondrion"/>
    <property type="evidence" value="ECO:0007669"/>
    <property type="project" value="GOC"/>
</dbReference>
<dbReference type="GO" id="GO:0003677">
    <property type="term" value="F:DNA binding"/>
    <property type="evidence" value="ECO:0007669"/>
    <property type="project" value="UniProtKB-UniRule"/>
</dbReference>
<dbReference type="GO" id="GO:0003899">
    <property type="term" value="F:DNA-directed RNA polymerase activity"/>
    <property type="evidence" value="ECO:0007669"/>
    <property type="project" value="UniProtKB-UniRule"/>
</dbReference>
<dbReference type="GO" id="GO:0032549">
    <property type="term" value="F:ribonucleoside binding"/>
    <property type="evidence" value="ECO:0007669"/>
    <property type="project" value="InterPro"/>
</dbReference>
<dbReference type="GO" id="GO:0006351">
    <property type="term" value="P:DNA-templated transcription"/>
    <property type="evidence" value="ECO:0007669"/>
    <property type="project" value="UniProtKB-UniRule"/>
</dbReference>
<dbReference type="CDD" id="cd00653">
    <property type="entry name" value="RNA_pol_B_RPB2"/>
    <property type="match status" value="1"/>
</dbReference>
<dbReference type="Gene3D" id="2.40.50.100">
    <property type="match status" value="2"/>
</dbReference>
<dbReference type="Gene3D" id="2.40.50.150">
    <property type="match status" value="1"/>
</dbReference>
<dbReference type="Gene3D" id="3.90.1100.10">
    <property type="match status" value="2"/>
</dbReference>
<dbReference type="Gene3D" id="2.30.150.10">
    <property type="entry name" value="DNA-directed RNA polymerase, beta subunit, external 1 domain"/>
    <property type="match status" value="1"/>
</dbReference>
<dbReference type="Gene3D" id="2.40.270.10">
    <property type="entry name" value="DNA-directed RNA polymerase, subunit 2, domain 6"/>
    <property type="match status" value="2"/>
</dbReference>
<dbReference type="Gene3D" id="3.90.1800.10">
    <property type="entry name" value="RNA polymerase alpha subunit dimerisation domain"/>
    <property type="match status" value="1"/>
</dbReference>
<dbReference type="Gene3D" id="3.90.1110.10">
    <property type="entry name" value="RNA polymerase Rpb2, domain 2"/>
    <property type="match status" value="2"/>
</dbReference>
<dbReference type="HAMAP" id="MF_01321">
    <property type="entry name" value="RNApol_bact_RpoB"/>
    <property type="match status" value="1"/>
</dbReference>
<dbReference type="InterPro" id="IPR042107">
    <property type="entry name" value="DNA-dir_RNA_pol_bsu_ext_1_sf"/>
</dbReference>
<dbReference type="InterPro" id="IPR015712">
    <property type="entry name" value="DNA-dir_RNA_pol_su2"/>
</dbReference>
<dbReference type="InterPro" id="IPR007120">
    <property type="entry name" value="DNA-dir_RNAP_su2_dom"/>
</dbReference>
<dbReference type="InterPro" id="IPR037033">
    <property type="entry name" value="DNA-dir_RNAP_su2_hyb_sf"/>
</dbReference>
<dbReference type="InterPro" id="IPR010243">
    <property type="entry name" value="RNA_pol_bsu_bac"/>
</dbReference>
<dbReference type="InterPro" id="IPR007121">
    <property type="entry name" value="RNA_pol_bsu_CS"/>
</dbReference>
<dbReference type="InterPro" id="IPR007644">
    <property type="entry name" value="RNA_pol_bsu_protrusion"/>
</dbReference>
<dbReference type="InterPro" id="IPR007642">
    <property type="entry name" value="RNA_pol_Rpb2_2"/>
</dbReference>
<dbReference type="InterPro" id="IPR037034">
    <property type="entry name" value="RNA_pol_Rpb2_2_sf"/>
</dbReference>
<dbReference type="InterPro" id="IPR007645">
    <property type="entry name" value="RNA_pol_Rpb2_3"/>
</dbReference>
<dbReference type="InterPro" id="IPR007641">
    <property type="entry name" value="RNA_pol_Rpb2_7"/>
</dbReference>
<dbReference type="InterPro" id="IPR014724">
    <property type="entry name" value="RNA_pol_RPB2_OB-fold"/>
</dbReference>
<dbReference type="PANTHER" id="PTHR20856">
    <property type="entry name" value="DNA-DIRECTED RNA POLYMERASE I SUBUNIT 2"/>
    <property type="match status" value="1"/>
</dbReference>
<dbReference type="Pfam" id="PF04563">
    <property type="entry name" value="RNA_pol_Rpb2_1"/>
    <property type="match status" value="1"/>
</dbReference>
<dbReference type="Pfam" id="PF04561">
    <property type="entry name" value="RNA_pol_Rpb2_2"/>
    <property type="match status" value="2"/>
</dbReference>
<dbReference type="Pfam" id="PF04565">
    <property type="entry name" value="RNA_pol_Rpb2_3"/>
    <property type="match status" value="1"/>
</dbReference>
<dbReference type="Pfam" id="PF00562">
    <property type="entry name" value="RNA_pol_Rpb2_6"/>
    <property type="match status" value="1"/>
</dbReference>
<dbReference type="Pfam" id="PF04560">
    <property type="entry name" value="RNA_pol_Rpb2_7"/>
    <property type="match status" value="1"/>
</dbReference>
<dbReference type="SUPFAM" id="SSF64484">
    <property type="entry name" value="beta and beta-prime subunits of DNA dependent RNA-polymerase"/>
    <property type="match status" value="2"/>
</dbReference>
<dbReference type="PROSITE" id="PS01166">
    <property type="entry name" value="RNA_POL_BETA"/>
    <property type="match status" value="1"/>
</dbReference>
<gene>
    <name evidence="1" type="primary">rpoB</name>
</gene>
<sequence length="2178" mass="252534">MQTTQNRLKTKRYASFFLNPKLNRPIQKKGWIKKADFNQLTDSLCKQSLKAYNEKLYSPLSQFKIPDFLNIQRSSFRQFLKSGLITEFKNCKSITNSNQTFEVFFYAEHYKLNRPKWTPKQAILKKKSYSSQLYLPIQLSNYQTEEVHLQWVLLANLPLMTKNGHFILNGCPRVLMNQIVRSPGVYFRKVVKNQKTVYSADFIAQRGSWLRLEVDTKKGDIWAKLKKTPKIPIFTFLRALGLTLPILNNSIDFAKLRYLLQFKEESKRSKKIKDFLGPGINNSLDIVEFRSLLKSLKKYMKPKPAKKSSKKQKTKKIKKWLTPFVCTTYFQSLLELCQKLYPQKKFLELDPKLAQKFLFRKFQNPRTYDLSILGREKINKKLGISIPLEKTILTSQDVLFACLFLMDLLQGLVISDDIDDLKNRKIKPSGELIQTQLSTGLIRLEKIIREKLKQPKQDSDSFSNLFSVKPLNQAFRDFFGTNPLSQLMDQTNALSEITHKRRLSSLGPGGINRETAGMAIRGIHPTHYGRICPIETPEGQNAGLVNSFTIFSHLNTKSFIETPFYKMYKGFILKNKNPFLFSSDQERNLVLAPGDIQTSLFHFLPPGVPIPSRQFKEFKRVSRNEINFIAVSPIQMISIATSLIPFLEHNDGNRALMGSNMQRQAVPTVRPSKPIVGTGLESRVISDVGHGLQVQKSGFVSYVDGNKIIIYSKKRIDQPFFFDTKKLHFPKKKVPFLNLDLQQQNTCRSSFKKKLVKSANIFTFKEKQLYQLSKIKNKKQRVCFEKSLKSQDFSSLLNFLTLFNIKTKVQAEKKASVQDASFILVPKKNLDLEVNKRIFLPVFLKKRNEYNFLNYYKLTERTLYSGFSILPFKLTNKGNYFNNKQISCLSNSLFLNDFLGQFHLLKFFSTKIFYSKLSRNFKPFISKRSLVLINKFSHQKLLFSYCKIILIHFYTKFNKKTPKNFLLNTKLSSKLMKRKDFSHFFRKDEKTMPIQNLTNFKSAHLHSQTAVKGVCQQIRSARKTQIANPFWYNSFPLFLIKSSPLTPLLFRRSFVPKVFNPLGLHFAYQQSKGPKHVSRTFKTLDRNEQKFSYNQKFQKLNFIFVKPYKFKRKNSPFAPFARSSKARGSAKAIFSQAQRLWGEKVFLVQNKENLPQTLGSCKIMTNQFYLKFSLLLKQQKKNFSNKKTGMENQNCQNSLTSQKNGFQCLKKMEPLHFPTKKSSISTLSFVKKILPYFQHPLLNLTTQNKIKNKLMIFKKPFLFWSACFADKQSLRSILFSLKKSQKVTTLKKTKVKKKFEIVYNENKKKYFQKINKNFFLPLLCRTRNLNFASNSLLFQISYPVAVNQSNLIQRNLISQELKHNSKRFIKTLLKIKPFVGKFVFPFCPICLKRKASIETQSFVKKSDKNFQFCFCFSRKKQKTLKPLLRIKSSDKMNTLKPLQKFSLLENFKVPPQSSLTARDKILRSTIGTKGLNDSLSMKSTDGEYAINDKKRRVEIINSSSLFYNNLIPQNYILNNYHRSNQDTYMIHRPLVQEGQWVEKGDILADSSVSVQGELSIGQNILVGYIPWEGYNFEDAVLISERLIFDDLYTSLHIERYEVEIRDTQFGLEQITNQIPNEKGEYDYIDSNGIAKIGTWVKEGDILVGKIAPIGQKKLTAYENLLYDILNKEIPKTRDTSLRVPRGVTGRVIHVEIVETTKKKGNDSSIFAKSLKFPKKQKLKRVTSPEYWYPVNTKKDQKVQSFSFKNKSEKLFLTPVQSYFNKEAKTKNPKLNSPFFYLNKRNPDFNLKRNKRIAKEMYFFNKNEKIKLSTLQIKIKGLEKKEFSFPKILKARFSLLQKAQTANLKIEKFLDDKFWNNVNYSNKNFSRNGSQKENSNADGLQFYNPLKKTKTKVLQPMEKTSFSGPQKVHIYLAEKRKLQIGDKIAGRHGNKGIISNILPRQDMPYLSDGTPLDIVLNPLGVPSRMNVGQILECLLGMAGYYLKQNFKIQPFDEIYGCEASRSLVYSKLYEARIKTGQDWLFNANHPGKTRLFDGRTGDCFKQPVTVGVAYILKLIHLVDDKIHARSTGPYSLVTQQPLRGRSKQGGQRVGEMEVWALEGFGAAYILQEILTIKSDDLKGRNQVMNSILNNKPVNFGLPESFKVLVRELQSLCLDIAIYRYRENGTPTKININNFW</sequence>
<keyword id="KW-0150">Chloroplast</keyword>
<keyword id="KW-0240">DNA-directed RNA polymerase</keyword>
<keyword id="KW-0548">Nucleotidyltransferase</keyword>
<keyword id="KW-0934">Plastid</keyword>
<keyword id="KW-0804">Transcription</keyword>
<keyword id="KW-0808">Transferase</keyword>
<comment type="function">
    <text evidence="1">DNA-dependent RNA polymerase catalyzes the transcription of DNA into RNA using the four ribonucleoside triphosphates as substrates.</text>
</comment>
<comment type="catalytic activity">
    <reaction evidence="1">
        <text>RNA(n) + a ribonucleoside 5'-triphosphate = RNA(n+1) + diphosphate</text>
        <dbReference type="Rhea" id="RHEA:21248"/>
        <dbReference type="Rhea" id="RHEA-COMP:14527"/>
        <dbReference type="Rhea" id="RHEA-COMP:17342"/>
        <dbReference type="ChEBI" id="CHEBI:33019"/>
        <dbReference type="ChEBI" id="CHEBI:61557"/>
        <dbReference type="ChEBI" id="CHEBI:140395"/>
        <dbReference type="EC" id="2.7.7.6"/>
    </reaction>
</comment>
<comment type="subunit">
    <text evidence="1">In plastids the minimal PEP RNA polymerase catalytic core is composed of four subunits: alpha, beta, beta', and beta''. When a (nuclear-encoded) sigma factor is associated with the core the holoenzyme is formed, which can initiate transcription.</text>
</comment>
<comment type="subcellular location">
    <subcellularLocation>
        <location>Plastid</location>
        <location>Chloroplast</location>
    </subcellularLocation>
</comment>
<comment type="similarity">
    <text evidence="1">Belongs to the RNA polymerase beta chain family.</text>
</comment>
<protein>
    <recommendedName>
        <fullName evidence="1">DNA-directed RNA polymerase subunit beta</fullName>
        <ecNumber evidence="1">2.7.7.6</ecNumber>
    </recommendedName>
    <alternativeName>
        <fullName evidence="1">PEP</fullName>
    </alternativeName>
    <alternativeName>
        <fullName evidence="1">Plastid-encoded RNA polymerase subunit beta</fullName>
        <shortName evidence="1">RNA polymerase subunit beta</shortName>
    </alternativeName>
</protein>
<reference key="1">
    <citation type="journal article" date="2005" name="Mol. Biol. Evol.">
        <title>The chloroplast genome sequence of the green alga Pseudendoclonium akinetum (Ulvophyceae) reveals unusual structural features and new insights into the branching order of chlorophyte lineages.</title>
        <authorList>
            <person name="Pombert J.-F."/>
            <person name="Otis C."/>
            <person name="Lemieux C."/>
            <person name="Turmel M."/>
        </authorList>
    </citation>
    <scope>NUCLEOTIDE SEQUENCE [LARGE SCALE GENOMIC DNA]</scope>
    <source>
        <strain>UTEX 1912</strain>
    </source>
</reference>